<protein>
    <recommendedName>
        <fullName>Netrin receptor UNC5D</fullName>
    </recommendedName>
    <alternativeName>
        <fullName>Protein unc-5 homolog 4</fullName>
    </alternativeName>
    <alternativeName>
        <fullName>Protein unc-5 homolog D</fullName>
    </alternativeName>
</protein>
<proteinExistence type="evidence at protein level"/>
<dbReference type="EMBL" id="AJ487854">
    <property type="protein sequence ID" value="CAD32252.1"/>
    <property type="molecule type" value="mRNA"/>
</dbReference>
<dbReference type="EMBL" id="BC137615">
    <property type="protein sequence ID" value="AAI37616.1"/>
    <property type="molecule type" value="mRNA"/>
</dbReference>
<dbReference type="CCDS" id="CCDS40314.1"/>
<dbReference type="RefSeq" id="NP_694775.1">
    <property type="nucleotide sequence ID" value="NM_153135.3"/>
</dbReference>
<dbReference type="SMR" id="Q8K1S2"/>
<dbReference type="BioGRID" id="229183">
    <property type="interactions" value="4"/>
</dbReference>
<dbReference type="FunCoup" id="Q8K1S2">
    <property type="interactions" value="67"/>
</dbReference>
<dbReference type="IntAct" id="Q8K1S2">
    <property type="interactions" value="1"/>
</dbReference>
<dbReference type="STRING" id="10090.ENSMUSP00000128521"/>
<dbReference type="GlyCosmos" id="Q8K1S2">
    <property type="glycosylation" value="4 sites, No reported glycans"/>
</dbReference>
<dbReference type="GlyGen" id="Q8K1S2">
    <property type="glycosylation" value="4 sites, 2 N-linked glycans (2 sites)"/>
</dbReference>
<dbReference type="PhosphoSitePlus" id="Q8K1S2"/>
<dbReference type="SwissPalm" id="Q8K1S2"/>
<dbReference type="PaxDb" id="10090-ENSMUSP00000128521"/>
<dbReference type="ProteomicsDB" id="275384"/>
<dbReference type="Antibodypedia" id="23389">
    <property type="antibodies" value="124 antibodies from 26 providers"/>
</dbReference>
<dbReference type="DNASU" id="210801"/>
<dbReference type="Ensembl" id="ENSMUST00000168630.4">
    <property type="protein sequence ID" value="ENSMUSP00000128521.3"/>
    <property type="gene ID" value="ENSMUSG00000063626.7"/>
</dbReference>
<dbReference type="GeneID" id="210801"/>
<dbReference type="KEGG" id="mmu:210801"/>
<dbReference type="UCSC" id="uc009liz.2">
    <property type="organism name" value="mouse"/>
</dbReference>
<dbReference type="AGR" id="MGI:2389364"/>
<dbReference type="CTD" id="137970"/>
<dbReference type="MGI" id="MGI:2389364">
    <property type="gene designation" value="Unc5d"/>
</dbReference>
<dbReference type="VEuPathDB" id="HostDB:ENSMUSG00000063626"/>
<dbReference type="eggNOG" id="KOG1480">
    <property type="taxonomic scope" value="Eukaryota"/>
</dbReference>
<dbReference type="GeneTree" id="ENSGT00950000182815"/>
<dbReference type="HOGENOM" id="CLU_014383_0_0_1"/>
<dbReference type="InParanoid" id="Q8K1S2"/>
<dbReference type="OMA" id="DESSXLR"/>
<dbReference type="OrthoDB" id="5973910at2759"/>
<dbReference type="PhylomeDB" id="Q8K1S2"/>
<dbReference type="TreeFam" id="TF316767"/>
<dbReference type="BioGRID-ORCS" id="210801">
    <property type="hits" value="0 hits in 77 CRISPR screens"/>
</dbReference>
<dbReference type="ChiTaRS" id="Unc5d">
    <property type="organism name" value="mouse"/>
</dbReference>
<dbReference type="PRO" id="PR:Q8K1S2"/>
<dbReference type="Proteomes" id="UP000000589">
    <property type="component" value="Chromosome 8"/>
</dbReference>
<dbReference type="RNAct" id="Q8K1S2">
    <property type="molecule type" value="protein"/>
</dbReference>
<dbReference type="Bgee" id="ENSMUSG00000063626">
    <property type="expression patterns" value="Expressed in cortical layer IV and 135 other cell types or tissues"/>
</dbReference>
<dbReference type="ExpressionAtlas" id="Q8K1S2">
    <property type="expression patterns" value="baseline and differential"/>
</dbReference>
<dbReference type="GO" id="GO:0009986">
    <property type="term" value="C:cell surface"/>
    <property type="evidence" value="ECO:0000314"/>
    <property type="project" value="MGI"/>
</dbReference>
<dbReference type="GO" id="GO:0005886">
    <property type="term" value="C:plasma membrane"/>
    <property type="evidence" value="ECO:0007669"/>
    <property type="project" value="UniProtKB-SubCell"/>
</dbReference>
<dbReference type="GO" id="GO:0005042">
    <property type="term" value="F:netrin receptor activity"/>
    <property type="evidence" value="ECO:0007669"/>
    <property type="project" value="InterPro"/>
</dbReference>
<dbReference type="GO" id="GO:0006915">
    <property type="term" value="P:apoptotic process"/>
    <property type="evidence" value="ECO:0007669"/>
    <property type="project" value="UniProtKB-KW"/>
</dbReference>
<dbReference type="GO" id="GO:0007411">
    <property type="term" value="P:axon guidance"/>
    <property type="evidence" value="ECO:0000316"/>
    <property type="project" value="MGI"/>
</dbReference>
<dbReference type="GO" id="GO:0098742">
    <property type="term" value="P:cell-cell adhesion via plasma-membrane adhesion molecules"/>
    <property type="evidence" value="ECO:0007669"/>
    <property type="project" value="Ensembl"/>
</dbReference>
<dbReference type="GO" id="GO:0021859">
    <property type="term" value="P:pyramidal neuron differentiation"/>
    <property type="evidence" value="ECO:0000314"/>
    <property type="project" value="MGI"/>
</dbReference>
<dbReference type="GO" id="GO:2001222">
    <property type="term" value="P:regulation of neuron migration"/>
    <property type="evidence" value="ECO:0000316"/>
    <property type="project" value="MGI"/>
</dbReference>
<dbReference type="CDD" id="cd08801">
    <property type="entry name" value="Death_UNC5D"/>
    <property type="match status" value="1"/>
</dbReference>
<dbReference type="FunFam" id="1.10.533.10:FF:000001">
    <property type="entry name" value="Unc-5 netrin receptor B"/>
    <property type="match status" value="1"/>
</dbReference>
<dbReference type="FunFam" id="2.20.100.10:FF:000002">
    <property type="entry name" value="Unc-5 netrin receptor C"/>
    <property type="match status" value="1"/>
</dbReference>
<dbReference type="FunFam" id="2.20.100.10:FF:000008">
    <property type="entry name" value="Unc-5 netrin receptor C"/>
    <property type="match status" value="1"/>
</dbReference>
<dbReference type="FunFam" id="2.60.40.10:FF:000037">
    <property type="entry name" value="Unc-5 netrin receptor C"/>
    <property type="match status" value="1"/>
</dbReference>
<dbReference type="FunFam" id="2.60.40.10:FF:000039">
    <property type="entry name" value="Unc-5 netrin receptor C"/>
    <property type="match status" value="1"/>
</dbReference>
<dbReference type="FunFam" id="2.60.220.30:FF:000006">
    <property type="entry name" value="Unc-5 netrin receptor D"/>
    <property type="match status" value="1"/>
</dbReference>
<dbReference type="Gene3D" id="2.60.220.30">
    <property type="match status" value="1"/>
</dbReference>
<dbReference type="Gene3D" id="1.10.533.10">
    <property type="entry name" value="Death Domain, Fas"/>
    <property type="match status" value="1"/>
</dbReference>
<dbReference type="Gene3D" id="2.60.40.10">
    <property type="entry name" value="Immunoglobulins"/>
    <property type="match status" value="2"/>
</dbReference>
<dbReference type="Gene3D" id="2.20.100.10">
    <property type="entry name" value="Thrombospondin type-1 (TSP1) repeat"/>
    <property type="match status" value="2"/>
</dbReference>
<dbReference type="InterPro" id="IPR011029">
    <property type="entry name" value="DEATH-like_dom_sf"/>
</dbReference>
<dbReference type="InterPro" id="IPR000488">
    <property type="entry name" value="Death_dom"/>
</dbReference>
<dbReference type="InterPro" id="IPR007110">
    <property type="entry name" value="Ig-like_dom"/>
</dbReference>
<dbReference type="InterPro" id="IPR036179">
    <property type="entry name" value="Ig-like_dom_sf"/>
</dbReference>
<dbReference type="InterPro" id="IPR013783">
    <property type="entry name" value="Ig-like_fold"/>
</dbReference>
<dbReference type="InterPro" id="IPR013098">
    <property type="entry name" value="Ig_I-set"/>
</dbReference>
<dbReference type="InterPro" id="IPR003599">
    <property type="entry name" value="Ig_sub"/>
</dbReference>
<dbReference type="InterPro" id="IPR003598">
    <property type="entry name" value="Ig_sub2"/>
</dbReference>
<dbReference type="InterPro" id="IPR000884">
    <property type="entry name" value="TSP1_rpt"/>
</dbReference>
<dbReference type="InterPro" id="IPR036383">
    <property type="entry name" value="TSP1_rpt_sf"/>
</dbReference>
<dbReference type="InterPro" id="IPR037936">
    <property type="entry name" value="UNC5"/>
</dbReference>
<dbReference type="InterPro" id="IPR042058">
    <property type="entry name" value="UNC5D_Death"/>
</dbReference>
<dbReference type="InterPro" id="IPR033772">
    <property type="entry name" value="UPA"/>
</dbReference>
<dbReference type="InterPro" id="IPR000906">
    <property type="entry name" value="ZU5_dom"/>
</dbReference>
<dbReference type="PANTHER" id="PTHR12582">
    <property type="entry name" value="NETRIN RECEPTOR UNC5"/>
    <property type="match status" value="1"/>
</dbReference>
<dbReference type="PANTHER" id="PTHR12582:SF5">
    <property type="entry name" value="NETRIN RECEPTOR UNC5D"/>
    <property type="match status" value="1"/>
</dbReference>
<dbReference type="Pfam" id="PF00531">
    <property type="entry name" value="Death"/>
    <property type="match status" value="1"/>
</dbReference>
<dbReference type="Pfam" id="PF07679">
    <property type="entry name" value="I-set"/>
    <property type="match status" value="1"/>
</dbReference>
<dbReference type="Pfam" id="PF00090">
    <property type="entry name" value="TSP_1"/>
    <property type="match status" value="2"/>
</dbReference>
<dbReference type="Pfam" id="PF17217">
    <property type="entry name" value="UPA"/>
    <property type="match status" value="1"/>
</dbReference>
<dbReference type="Pfam" id="PF00791">
    <property type="entry name" value="ZU5"/>
    <property type="match status" value="1"/>
</dbReference>
<dbReference type="PRINTS" id="PR01705">
    <property type="entry name" value="TSP1REPEAT"/>
</dbReference>
<dbReference type="SMART" id="SM00005">
    <property type="entry name" value="DEATH"/>
    <property type="match status" value="1"/>
</dbReference>
<dbReference type="SMART" id="SM00409">
    <property type="entry name" value="IG"/>
    <property type="match status" value="1"/>
</dbReference>
<dbReference type="SMART" id="SM00408">
    <property type="entry name" value="IGc2"/>
    <property type="match status" value="1"/>
</dbReference>
<dbReference type="SMART" id="SM00209">
    <property type="entry name" value="TSP1"/>
    <property type="match status" value="2"/>
</dbReference>
<dbReference type="SMART" id="SM00218">
    <property type="entry name" value="ZU5"/>
    <property type="match status" value="1"/>
</dbReference>
<dbReference type="SUPFAM" id="SSF47986">
    <property type="entry name" value="DEATH domain"/>
    <property type="match status" value="1"/>
</dbReference>
<dbReference type="SUPFAM" id="SSF48726">
    <property type="entry name" value="Immunoglobulin"/>
    <property type="match status" value="2"/>
</dbReference>
<dbReference type="SUPFAM" id="SSF82895">
    <property type="entry name" value="TSP-1 type 1 repeat"/>
    <property type="match status" value="2"/>
</dbReference>
<dbReference type="PROSITE" id="PS50835">
    <property type="entry name" value="IG_LIKE"/>
    <property type="match status" value="1"/>
</dbReference>
<dbReference type="PROSITE" id="PS50092">
    <property type="entry name" value="TSP1"/>
    <property type="match status" value="2"/>
</dbReference>
<dbReference type="PROSITE" id="PS51145">
    <property type="entry name" value="ZU5"/>
    <property type="match status" value="1"/>
</dbReference>
<gene>
    <name type="primary">Unc5d</name>
    <name type="synonym">Unc5h4</name>
</gene>
<accession>Q8K1S2</accession>
<accession>B9EHC0</accession>
<keyword id="KW-0053">Apoptosis</keyword>
<keyword id="KW-1003">Cell membrane</keyword>
<keyword id="KW-0217">Developmental protein</keyword>
<keyword id="KW-1015">Disulfide bond</keyword>
<keyword id="KW-0325">Glycoprotein</keyword>
<keyword id="KW-0393">Immunoglobulin domain</keyword>
<keyword id="KW-0472">Membrane</keyword>
<keyword id="KW-0675">Receptor</keyword>
<keyword id="KW-1185">Reference proteome</keyword>
<keyword id="KW-0677">Repeat</keyword>
<keyword id="KW-0732">Signal</keyword>
<keyword id="KW-0812">Transmembrane</keyword>
<keyword id="KW-1133">Transmembrane helix</keyword>
<feature type="signal peptide" evidence="5">
    <location>
        <begin position="1"/>
        <end position="30"/>
    </location>
</feature>
<feature type="chain" id="PRO_0000036080" description="Netrin receptor UNC5D">
    <location>
        <begin position="31"/>
        <end position="956"/>
    </location>
</feature>
<feature type="topological domain" description="Extracellular" evidence="5">
    <location>
        <begin position="31"/>
        <end position="382"/>
    </location>
</feature>
<feature type="transmembrane region" description="Helical" evidence="5">
    <location>
        <begin position="383"/>
        <end position="403"/>
    </location>
</feature>
<feature type="topological domain" description="Cytoplasmic" evidence="5">
    <location>
        <begin position="404"/>
        <end position="956"/>
    </location>
</feature>
<feature type="domain" description="Ig-like">
    <location>
        <begin position="52"/>
        <end position="149"/>
    </location>
</feature>
<feature type="domain" description="Ig-like C2-type">
    <location>
        <begin position="151"/>
        <end position="242"/>
    </location>
</feature>
<feature type="domain" description="TSP type-1 1" evidence="6">
    <location>
        <begin position="250"/>
        <end position="304"/>
    </location>
</feature>
<feature type="domain" description="TSP type-1 2" evidence="6">
    <location>
        <begin position="306"/>
        <end position="358"/>
    </location>
</feature>
<feature type="domain" description="ZU5" evidence="7">
    <location>
        <begin position="545"/>
        <end position="685"/>
    </location>
</feature>
<feature type="domain" description="Death">
    <location>
        <begin position="862"/>
        <end position="939"/>
    </location>
</feature>
<feature type="region of interest" description="Important for interaction with FLRT2" evidence="2">
    <location>
        <begin position="89"/>
        <end position="91"/>
    </location>
</feature>
<feature type="site" description="Cleavage; by caspase-3" evidence="15">
    <location>
        <begin position="419"/>
        <end position="420"/>
    </location>
</feature>
<feature type="glycosylation site" description="N-linked (GlcNAc...) asparagine" evidence="5">
    <location>
        <position position="115"/>
    </location>
</feature>
<feature type="glycosylation site" description="N-linked (GlcNAc...) asparagine" evidence="5">
    <location>
        <position position="226"/>
    </location>
</feature>
<feature type="glycosylation site" description="N-linked (GlcNAc...) asparagine" evidence="5">
    <location>
        <position position="351"/>
    </location>
</feature>
<feature type="glycosylation site" description="N-linked (GlcNAc...) asparagine" evidence="5">
    <location>
        <position position="379"/>
    </location>
</feature>
<feature type="disulfide bond" evidence="4">
    <location>
        <begin position="73"/>
        <end position="134"/>
    </location>
</feature>
<feature type="disulfide bond" evidence="4">
    <location>
        <begin position="85"/>
        <end position="132"/>
    </location>
</feature>
<feature type="disulfide bond" evidence="4">
    <location>
        <begin position="178"/>
        <end position="229"/>
    </location>
</feature>
<feature type="disulfide bond" evidence="1">
    <location>
        <begin position="262"/>
        <end position="299"/>
    </location>
</feature>
<feature type="disulfide bond" evidence="1">
    <location>
        <begin position="266"/>
        <end position="303"/>
    </location>
</feature>
<feature type="disulfide bond" evidence="1">
    <location>
        <begin position="277"/>
        <end position="289"/>
    </location>
</feature>
<feature type="disulfide bond" evidence="4">
    <location>
        <begin position="318"/>
        <end position="352"/>
    </location>
</feature>
<feature type="disulfide bond" evidence="4">
    <location>
        <begin position="322"/>
        <end position="357"/>
    </location>
</feature>
<feature type="disulfide bond" evidence="4">
    <location>
        <begin position="330"/>
        <end position="342"/>
    </location>
</feature>
<sequence length="956" mass="106352">MGTGAADGSRGARRWLPWLGLFFWAAGAAAARGADGSEILPDSIPSAPGTLPHFIEEPEDAYIIKSNPIALRCKARPAMQIFFKCNGEWVHQNEHVSEESLDESSGLKVREVFINVTRQQVEDFHGPEDYWCQCVAWSHLGTSKSRKASVRIAYLRKNFEQDPQGREVPIEGMIVLHCRPPEGVPAAEVEWLKNEEPIDSEQDENIDTRADHNLIIRQARLSDSGNYTCMAANIVAKRRSLSATVVVYVNGGWSSWTEWSACNVRCGRGWQKRSRTCTNPAPLNGGAFCEGMSVQKITCTALCPVDGSWEVWSEWSVCSPECEHLRIRECTAPPPRNGGKFCEGLSQESENCTDGLCILDKKPLHEIKPQRWSRRGIENASDIALYSGLGAAVVAVAVLVIGVTLYRRSHSDYGVDVIDSSALTGGFQTFNFKTVRQGNSLLLNPAMQPDLTVSRTYSGPICLQDPLDKELMTESSLFNPLSDIKVKVQSSFMVSLGVSERAEYHGKNHSGTFPHGNNRGFSTIHPRNKTPYIQNLSSLPTRTELRTTGVFGHLGGRLVMPNTGVSLLIPHGAIPEENSWEIYMSINQGEPSLQSDGSEVLLSPEVTCGPPDMLVTTPFALTIPHCADVSSEHWNIHLKKRTQQGKWEEVMSVEDESTSCYCLLDPFACHVLLDSFGTYALTGEPITDCAVKQLKVAVFGCMSCNSLDYNLRVYCVDNTPCAFQEVISDERHQGGQLLEEPKLLHFKGNTFSLQVSVLDIPPFLWRIKPFTACQEVPFSRVWSSNRQPLHCAFSLERYTPTTTQLSCKICIRQLKGHEQILQVQTSILESERETITFFAQEDSTFPAQTGPKAFKIPYSIRQRICATFDTPNAKGKDWQMLAQKNSINRNLSYFATQSSPSAVILNLWEARHQQDGDLDSLACALEEIGRTHTKLSNITEPQIDDADFNYSRQNGL</sequence>
<reference key="1">
    <citation type="journal article" date="2002" name="Mech. Dev.">
        <title>Cloning of three mouse Unc5 genes and their expression patterns at mid-gestation.</title>
        <authorList>
            <person name="Engelkamp D."/>
        </authorList>
    </citation>
    <scope>NUCLEOTIDE SEQUENCE [MRNA]</scope>
    <scope>TISSUE SPECIFICITY</scope>
</reference>
<reference key="2">
    <citation type="journal article" date="2004" name="Genome Res.">
        <title>The status, quality, and expansion of the NIH full-length cDNA project: the Mammalian Gene Collection (MGC).</title>
        <authorList>
            <consortium name="The MGC Project Team"/>
        </authorList>
    </citation>
    <scope>NUCLEOTIDE SEQUENCE [LARGE SCALE MRNA]</scope>
    <source>
        <tissue>Testis</tissue>
    </source>
</reference>
<reference key="3">
    <citation type="journal article" date="2008" name="Mol. Cell. Neurosci.">
        <title>The cortical subventricular zone-specific molecule Svet1 is part of the nuclear RNA coded by the putative netrin receptor gene Unc5d and is expressed in multipolar migrating cells.</title>
        <authorList>
            <person name="Sasaki S."/>
            <person name="Tabata H."/>
            <person name="Tachikawa K."/>
            <person name="Nakajima K."/>
        </authorList>
    </citation>
    <scope>TISSUE SPECIFICITY</scope>
</reference>
<reference key="4">
    <citation type="journal article" date="2009" name="PLoS ONE">
        <title>Unc5B interacts with FLRT3 and Rnd1 to modulate cell adhesion in Xenopus embryos.</title>
        <authorList>
            <person name="Karaulanov E."/>
            <person name="Boettcher R.T."/>
            <person name="Stannek P."/>
            <person name="Wu W."/>
            <person name="Rau M."/>
            <person name="Ogata S."/>
            <person name="Cho K.W.Y."/>
            <person name="Niehrs C."/>
        </authorList>
    </citation>
    <scope>INTERACTION WITH FLRT3</scope>
</reference>
<reference key="5">
    <citation type="journal article" date="2011" name="Cereb. Cortex">
        <title>Laminar and areal expression of unc5d and its role in cortical cell survival.</title>
        <authorList>
            <person name="Takemoto M."/>
            <person name="Hattori Y."/>
            <person name="Zhao H."/>
            <person name="Sato H."/>
            <person name="Tamada A."/>
            <person name="Sasaki S."/>
            <person name="Nakajima K."/>
            <person name="Yamamoto N."/>
        </authorList>
    </citation>
    <scope>FUNCTION</scope>
    <scope>SUBCELLULAR LOCATION</scope>
    <scope>TISSUE SPECIFICITY</scope>
</reference>
<reference key="6">
    <citation type="journal article" date="2011" name="EMBO J.">
        <title>FLRT2 and FLRT3 act as repulsive guidance cues for Unc5-positive neurons.</title>
        <authorList>
            <person name="Yamagishi S."/>
            <person name="Hampel F."/>
            <person name="Hata K."/>
            <person name="Del Toro D."/>
            <person name="Schwark M."/>
            <person name="Kvachnina E."/>
            <person name="Bastmeyer M."/>
            <person name="Yamashita T."/>
            <person name="Tarabykin V."/>
            <person name="Klein R."/>
            <person name="Egea J."/>
        </authorList>
    </citation>
    <scope>DISRUPTION PHENOTYPE</scope>
    <scope>INTERACTION WITH FLRT3</scope>
    <scope>FUNCTION</scope>
    <scope>SUBCELLULAR LOCATION</scope>
    <scope>TISSUE SPECIFICITY</scope>
</reference>
<reference key="7">
    <citation type="journal article" date="2014" name="Neuron">
        <title>FLRT structure: balancing repulsion and cell adhesion in cortical and vascular development.</title>
        <authorList>
            <person name="Seiradake E."/>
            <person name="del Toro D."/>
            <person name="Nagel D."/>
            <person name="Cop F."/>
            <person name="Haertl R."/>
            <person name="Ruff T."/>
            <person name="Seyit-Bremer G."/>
            <person name="Harlos K."/>
            <person name="Border E.C."/>
            <person name="Acker-Palmer A."/>
            <person name="Jones E.Y."/>
            <person name="Klein R."/>
        </authorList>
    </citation>
    <scope>INTERACTION WITH FLRT2 AND FLRT3</scope>
</reference>
<reference key="8">
    <citation type="journal article" date="2015" name="Structure">
        <title>Structural basis of latrophilin-FLRT-UNC5 interaction in cell adhesion.</title>
        <authorList>
            <person name="Lu Y.C."/>
            <person name="Nazarko O.V."/>
            <person name="Sando R. III"/>
            <person name="Salzman G.S."/>
            <person name="Suedhof T.C."/>
            <person name="Arac D."/>
        </authorList>
    </citation>
    <scope>FUNCTION</scope>
    <scope>INTERACTION WITH FLRT3</scope>
    <scope>SUBUNIT</scope>
    <scope>SUBCELLULAR LOCATION</scope>
</reference>
<name>UNC5D_MOUSE</name>
<organism>
    <name type="scientific">Mus musculus</name>
    <name type="common">Mouse</name>
    <dbReference type="NCBI Taxonomy" id="10090"/>
    <lineage>
        <taxon>Eukaryota</taxon>
        <taxon>Metazoa</taxon>
        <taxon>Chordata</taxon>
        <taxon>Craniata</taxon>
        <taxon>Vertebrata</taxon>
        <taxon>Euteleostomi</taxon>
        <taxon>Mammalia</taxon>
        <taxon>Eutheria</taxon>
        <taxon>Euarchontoglires</taxon>
        <taxon>Glires</taxon>
        <taxon>Rodentia</taxon>
        <taxon>Myomorpha</taxon>
        <taxon>Muroidea</taxon>
        <taxon>Muridae</taxon>
        <taxon>Murinae</taxon>
        <taxon>Mus</taxon>
        <taxon>Mus</taxon>
    </lineage>
</organism>
<evidence type="ECO:0000250" key="1"/>
<evidence type="ECO:0000250" key="2">
    <source>
        <dbReference type="UniProtKB" id="F1LW30"/>
    </source>
</evidence>
<evidence type="ECO:0000250" key="3">
    <source>
        <dbReference type="UniProtKB" id="Q6UXZ4"/>
    </source>
</evidence>
<evidence type="ECO:0000250" key="4">
    <source>
        <dbReference type="UniProtKB" id="Q6ZN44"/>
    </source>
</evidence>
<evidence type="ECO:0000255" key="5"/>
<evidence type="ECO:0000255" key="6">
    <source>
        <dbReference type="PROSITE-ProRule" id="PRU00210"/>
    </source>
</evidence>
<evidence type="ECO:0000255" key="7">
    <source>
        <dbReference type="PROSITE-ProRule" id="PRU00485"/>
    </source>
</evidence>
<evidence type="ECO:0000269" key="8">
    <source>
    </source>
</evidence>
<evidence type="ECO:0000269" key="9">
    <source>
    </source>
</evidence>
<evidence type="ECO:0000269" key="10">
    <source>
    </source>
</evidence>
<evidence type="ECO:0000269" key="11">
    <source>
    </source>
</evidence>
<evidence type="ECO:0000269" key="12">
    <source>
    </source>
</evidence>
<evidence type="ECO:0000269" key="13">
    <source>
    </source>
</evidence>
<evidence type="ECO:0000269" key="14">
    <source>
    </source>
</evidence>
<evidence type="ECO:0000305" key="15"/>
<comment type="function">
    <text evidence="3 11 12 14 15">Receptor for the netrin NTN4 that promotes neuronal cell survival (PubMed:21216843). Plays a role in cell-cell adhesion and cell guidance. Receptor for netrin involved in cell migration (By similarity). Plays a role in the regulation of neuronal cell migration in the developing brain via its interaction with FLRT2 (PubMed:21673655). Plays a role in axon guidance by mediating axon repulsion of neuronal growth cones in the developing nervous system upon ligand binding (PubMed:21673655). May play a role in apoptosis in response to DNA damage. It also acts as a dependence receptor required for apoptosis induction when not associated with netrin ligand (By similarity). Mediates cell-cell adhesion via its interaction with FLRT3 on an adjacent cell (PubMed:26235030).</text>
</comment>
<comment type="subunit">
    <text evidence="10 12 13 14">Interacts (via extracellular domain) with FLRT2 and FLRT3 (via extracellular domain); the interaction is direct (PubMed:19492039, PubMed:21673655, PubMed:25374360, PubMed:26235030). Has higher affinity for FLRT2 (PubMed:25374360). Identified in a complex with FLRT3 and ADGRL3; does not interact with ADGRL3 by itself (PubMed:26235030).</text>
</comment>
<comment type="subcellular location">
    <subcellularLocation>
        <location evidence="11 12 14">Cell membrane</location>
        <topology evidence="15">Single-pass type I membrane protein</topology>
    </subcellularLocation>
</comment>
<comment type="tissue specificity">
    <text evidence="8 9 11 12">Detected in multipolar cells in the brain subventricular zone (at protein level) (PubMed:18547816). Detected in embryonic brain neocortex, especially in the subventricular zone (PubMed:21673655). Detected in multipolar cells in the brain subventricular zone (PubMed:18547816). Detected in brain neocortex from young pups, especially in the somatosensory cortex (PubMed:21216843). Expressed in developing limb and mammary gland (PubMed:12351186).</text>
</comment>
<comment type="PTM">
    <text evidence="3">Proteolytically cleaved by caspases during apoptosis. The cleavage does not take place when the receptor is associated with netrin ligand. Its cleavage by caspases is required to induce apoptosis (By similarity).</text>
</comment>
<comment type="disruption phenotype">
    <text evidence="12">No visible phenotype. Mice are viable, appear healthy, and do not display any obvious behavorial defects. Cortical neurons from mutant mice display impaired axon growth cone collapse in response to Flrt2 and a tendency towards accelerated radial migration in the developing brain.</text>
</comment>
<comment type="similarity">
    <text evidence="15">Belongs to the unc-5 family.</text>
</comment>